<proteinExistence type="evidence at protein level"/>
<keyword id="KW-0002">3D-structure</keyword>
<keyword id="KW-0903">Direct protein sequencing</keyword>
<keyword id="KW-0539">Nucleus</keyword>
<keyword id="KW-0597">Phosphoprotein</keyword>
<keyword id="KW-1185">Reference proteome</keyword>
<keyword id="KW-0804">Transcription</keyword>
<keyword id="KW-0805">Transcription regulation</keyword>
<gene>
    <name type="primary">Taf6</name>
    <name type="synonym">Taf60</name>
    <name type="ORF">CG32211</name>
</gene>
<evidence type="ECO:0000269" key="1">
    <source>
    </source>
</evidence>
<evidence type="ECO:0000269" key="2">
    <source>
    </source>
</evidence>
<evidence type="ECO:0000269" key="3">
    <source>
    </source>
</evidence>
<evidence type="ECO:0000305" key="4"/>
<evidence type="ECO:0007829" key="5">
    <source>
        <dbReference type="PDB" id="1TAF"/>
    </source>
</evidence>
<reference key="1">
    <citation type="journal article" date="2000" name="Science">
        <title>The genome sequence of Drosophila melanogaster.</title>
        <authorList>
            <person name="Adams M.D."/>
            <person name="Celniker S.E."/>
            <person name="Holt R.A."/>
            <person name="Evans C.A."/>
            <person name="Gocayne J.D."/>
            <person name="Amanatides P.G."/>
            <person name="Scherer S.E."/>
            <person name="Li P.W."/>
            <person name="Hoskins R.A."/>
            <person name="Galle R.F."/>
            <person name="George R.A."/>
            <person name="Lewis S.E."/>
            <person name="Richards S."/>
            <person name="Ashburner M."/>
            <person name="Henderson S.N."/>
            <person name="Sutton G.G."/>
            <person name="Wortman J.R."/>
            <person name="Yandell M.D."/>
            <person name="Zhang Q."/>
            <person name="Chen L.X."/>
            <person name="Brandon R.C."/>
            <person name="Rogers Y.-H.C."/>
            <person name="Blazej R.G."/>
            <person name="Champe M."/>
            <person name="Pfeiffer B.D."/>
            <person name="Wan K.H."/>
            <person name="Doyle C."/>
            <person name="Baxter E.G."/>
            <person name="Helt G."/>
            <person name="Nelson C.R."/>
            <person name="Miklos G.L.G."/>
            <person name="Abril J.F."/>
            <person name="Agbayani A."/>
            <person name="An H.-J."/>
            <person name="Andrews-Pfannkoch C."/>
            <person name="Baldwin D."/>
            <person name="Ballew R.M."/>
            <person name="Basu A."/>
            <person name="Baxendale J."/>
            <person name="Bayraktaroglu L."/>
            <person name="Beasley E.M."/>
            <person name="Beeson K.Y."/>
            <person name="Benos P.V."/>
            <person name="Berman B.P."/>
            <person name="Bhandari D."/>
            <person name="Bolshakov S."/>
            <person name="Borkova D."/>
            <person name="Botchan M.R."/>
            <person name="Bouck J."/>
            <person name="Brokstein P."/>
            <person name="Brottier P."/>
            <person name="Burtis K.C."/>
            <person name="Busam D.A."/>
            <person name="Butler H."/>
            <person name="Cadieu E."/>
            <person name="Center A."/>
            <person name="Chandra I."/>
            <person name="Cherry J.M."/>
            <person name="Cawley S."/>
            <person name="Dahlke C."/>
            <person name="Davenport L.B."/>
            <person name="Davies P."/>
            <person name="de Pablos B."/>
            <person name="Delcher A."/>
            <person name="Deng Z."/>
            <person name="Mays A.D."/>
            <person name="Dew I."/>
            <person name="Dietz S.M."/>
            <person name="Dodson K."/>
            <person name="Doup L.E."/>
            <person name="Downes M."/>
            <person name="Dugan-Rocha S."/>
            <person name="Dunkov B.C."/>
            <person name="Dunn P."/>
            <person name="Durbin K.J."/>
            <person name="Evangelista C.C."/>
            <person name="Ferraz C."/>
            <person name="Ferriera S."/>
            <person name="Fleischmann W."/>
            <person name="Fosler C."/>
            <person name="Gabrielian A.E."/>
            <person name="Garg N.S."/>
            <person name="Gelbart W.M."/>
            <person name="Glasser K."/>
            <person name="Glodek A."/>
            <person name="Gong F."/>
            <person name="Gorrell J.H."/>
            <person name="Gu Z."/>
            <person name="Guan P."/>
            <person name="Harris M."/>
            <person name="Harris N.L."/>
            <person name="Harvey D.A."/>
            <person name="Heiman T.J."/>
            <person name="Hernandez J.R."/>
            <person name="Houck J."/>
            <person name="Hostin D."/>
            <person name="Houston K.A."/>
            <person name="Howland T.J."/>
            <person name="Wei M.-H."/>
            <person name="Ibegwam C."/>
            <person name="Jalali M."/>
            <person name="Kalush F."/>
            <person name="Karpen G.H."/>
            <person name="Ke Z."/>
            <person name="Kennison J.A."/>
            <person name="Ketchum K.A."/>
            <person name="Kimmel B.E."/>
            <person name="Kodira C.D."/>
            <person name="Kraft C.L."/>
            <person name="Kravitz S."/>
            <person name="Kulp D."/>
            <person name="Lai Z."/>
            <person name="Lasko P."/>
            <person name="Lei Y."/>
            <person name="Levitsky A.A."/>
            <person name="Li J.H."/>
            <person name="Li Z."/>
            <person name="Liang Y."/>
            <person name="Lin X."/>
            <person name="Liu X."/>
            <person name="Mattei B."/>
            <person name="McIntosh T.C."/>
            <person name="McLeod M.P."/>
            <person name="McPherson D."/>
            <person name="Merkulov G."/>
            <person name="Milshina N.V."/>
            <person name="Mobarry C."/>
            <person name="Morris J."/>
            <person name="Moshrefi A."/>
            <person name="Mount S.M."/>
            <person name="Moy M."/>
            <person name="Murphy B."/>
            <person name="Murphy L."/>
            <person name="Muzny D.M."/>
            <person name="Nelson D.L."/>
            <person name="Nelson D.R."/>
            <person name="Nelson K.A."/>
            <person name="Nixon K."/>
            <person name="Nusskern D.R."/>
            <person name="Pacleb J.M."/>
            <person name="Palazzolo M."/>
            <person name="Pittman G.S."/>
            <person name="Pan S."/>
            <person name="Pollard J."/>
            <person name="Puri V."/>
            <person name="Reese M.G."/>
            <person name="Reinert K."/>
            <person name="Remington K."/>
            <person name="Saunders R.D.C."/>
            <person name="Scheeler F."/>
            <person name="Shen H."/>
            <person name="Shue B.C."/>
            <person name="Siden-Kiamos I."/>
            <person name="Simpson M."/>
            <person name="Skupski M.P."/>
            <person name="Smith T.J."/>
            <person name="Spier E."/>
            <person name="Spradling A.C."/>
            <person name="Stapleton M."/>
            <person name="Strong R."/>
            <person name="Sun E."/>
            <person name="Svirskas R."/>
            <person name="Tector C."/>
            <person name="Turner R."/>
            <person name="Venter E."/>
            <person name="Wang A.H."/>
            <person name="Wang X."/>
            <person name="Wang Z.-Y."/>
            <person name="Wassarman D.A."/>
            <person name="Weinstock G.M."/>
            <person name="Weissenbach J."/>
            <person name="Williams S.M."/>
            <person name="Woodage T."/>
            <person name="Worley K.C."/>
            <person name="Wu D."/>
            <person name="Yang S."/>
            <person name="Yao Q.A."/>
            <person name="Ye J."/>
            <person name="Yeh R.-F."/>
            <person name="Zaveri J.S."/>
            <person name="Zhan M."/>
            <person name="Zhang G."/>
            <person name="Zhao Q."/>
            <person name="Zheng L."/>
            <person name="Zheng X.H."/>
            <person name="Zhong F.N."/>
            <person name="Zhong W."/>
            <person name="Zhou X."/>
            <person name="Zhu S.C."/>
            <person name="Zhu X."/>
            <person name="Smith H.O."/>
            <person name="Gibbs R.A."/>
            <person name="Myers E.W."/>
            <person name="Rubin G.M."/>
            <person name="Venter J.C."/>
        </authorList>
    </citation>
    <scope>NUCLEOTIDE SEQUENCE [LARGE SCALE GENOMIC DNA]</scope>
    <source>
        <strain>Berkeley</strain>
    </source>
</reference>
<reference key="2">
    <citation type="journal article" date="2002" name="Genome Biol.">
        <title>Annotation of the Drosophila melanogaster euchromatic genome: a systematic review.</title>
        <authorList>
            <person name="Misra S."/>
            <person name="Crosby M.A."/>
            <person name="Mungall C.J."/>
            <person name="Matthews B.B."/>
            <person name="Campbell K.S."/>
            <person name="Hradecky P."/>
            <person name="Huang Y."/>
            <person name="Kaminker J.S."/>
            <person name="Millburn G.H."/>
            <person name="Prochnik S.E."/>
            <person name="Smith C.D."/>
            <person name="Tupy J.L."/>
            <person name="Whitfield E.J."/>
            <person name="Bayraktaroglu L."/>
            <person name="Berman B.P."/>
            <person name="Bettencourt B.R."/>
            <person name="Celniker S.E."/>
            <person name="de Grey A.D.N.J."/>
            <person name="Drysdale R.A."/>
            <person name="Harris N.L."/>
            <person name="Richter J."/>
            <person name="Russo S."/>
            <person name="Schroeder A.J."/>
            <person name="Shu S.Q."/>
            <person name="Stapleton M."/>
            <person name="Yamada C."/>
            <person name="Ashburner M."/>
            <person name="Gelbart W.M."/>
            <person name="Rubin G.M."/>
            <person name="Lewis S.E."/>
        </authorList>
    </citation>
    <scope>GENOME REANNOTATION</scope>
    <source>
        <strain>Berkeley</strain>
    </source>
</reference>
<reference key="3">
    <citation type="journal article" date="2002" name="Genome Biol.">
        <title>A Drosophila full-length cDNA resource.</title>
        <authorList>
            <person name="Stapleton M."/>
            <person name="Carlson J.W."/>
            <person name="Brokstein P."/>
            <person name="Yu C."/>
            <person name="Champe M."/>
            <person name="George R.A."/>
            <person name="Guarin H."/>
            <person name="Kronmiller B."/>
            <person name="Pacleb J.M."/>
            <person name="Park S."/>
            <person name="Wan K.H."/>
            <person name="Rubin G.M."/>
            <person name="Celniker S.E."/>
        </authorList>
    </citation>
    <scope>NUCLEOTIDE SEQUENCE [LARGE SCALE MRNA]</scope>
    <source>
        <strain>Berkeley</strain>
        <tissue>Embryo</tissue>
    </source>
</reference>
<reference key="4">
    <citation type="journal article" date="1994" name="Nature">
        <title>Molecular cloning of Drosophila TFIID subunits.</title>
        <authorList>
            <person name="Kokubo T."/>
            <person name="Gong D.-W."/>
            <person name="Wootton J.C."/>
            <person name="Horikoshi M."/>
            <person name="Roeder R.G."/>
            <person name="Nakatani Y."/>
        </authorList>
    </citation>
    <scope>NUCLEOTIDE SEQUENCE [MRNA] OF 3-606</scope>
    <scope>PARTIAL PROTEIN SEQUENCE</scope>
</reference>
<reference key="5">
    <citation type="journal article" date="1993" name="EMBO J.">
        <title>Cloning and expression of Drosophila TAFII60 and human TAFII70 reveal conserved interactions with other subunits of TFIID.</title>
        <authorList>
            <person name="Weinzierl R.O."/>
            <person name="Ruppert S."/>
            <person name="Dynlacht B.D."/>
            <person name="Tanese N."/>
            <person name="Tjian R."/>
        </authorList>
    </citation>
    <scope>NUCLEOTIDE SEQUENCE [MRNA] OF 7-606</scope>
    <scope>PARTIAL PROTEIN SEQUENCE</scope>
    <scope>FUNCTION</scope>
    <scope>INTERACTION WITH TAF1</scope>
    <source>
        <strain>Oregon-R</strain>
    </source>
</reference>
<reference key="6">
    <citation type="journal article" date="2008" name="J. Proteome Res.">
        <title>Phosphoproteome analysis of Drosophila melanogaster embryos.</title>
        <authorList>
            <person name="Zhai B."/>
            <person name="Villen J."/>
            <person name="Beausoleil S.A."/>
            <person name="Mintseris J."/>
            <person name="Gygi S.P."/>
        </authorList>
    </citation>
    <scope>PHOSPHORYLATION [LARGE SCALE ANALYSIS] AT SER-546; SER-547 AND SER-550</scope>
    <scope>IDENTIFICATION BY MASS SPECTROMETRY</scope>
    <source>
        <tissue>Embryo</tissue>
    </source>
</reference>
<reference key="7">
    <citation type="journal article" date="1996" name="Nature">
        <title>Structural similarity between TAFs and the heterotetrameric core of the histone octamer.</title>
        <authorList>
            <person name="Xie X."/>
            <person name="Kokubo T."/>
            <person name="Cohen S.L."/>
            <person name="Mirza U.A."/>
            <person name="Hoffmann A."/>
            <person name="Chait B.T."/>
            <person name="Roeder R.G."/>
            <person name="Nakatani Y."/>
            <person name="Burley S.K."/>
        </authorList>
    </citation>
    <scope>X-RAY CRYSTALLOGRAPHY (2.0 ANGSTROMS) OF 15-84</scope>
    <scope>INTERACTION WITH TAF9</scope>
</reference>
<accession>P49847</accession>
<accession>Q961B6</accession>
<accession>Q9VW16</accession>
<sequence length="606" mass="65654">MSGKPSKPSSPSSSMLYGSSISAESMKVIAESIGVGSLSDDAAKELAEDVSIKLKRIVQDAAKFMNHAKRQKLSVRDIDMSLKVRNVEPQYGFVAKDFIPFRFASGGGRELHFTEDKEIDLGEITSTNSVKIPLDLTLRSHWFVVEGVQPTVPENPPPLSKDSQLLDSVNPVIKMDQGLNKDAAGKPTTGKIHKLKNVETIHVKQLATHELSVEQQLYYKEITEACVGSDEPRRGEALQSLGSDPGLHEMLPRMCTFIAEGVKVNVVQNNLALLIYLMRMVRALLDNPSLFLEKYLHELIPSVMTCIVSKQLCMRPELDNHWALRDFASRLMAQICKNFNTLTNNLQTRVTRIFSKALQNDKTHLSSLYGSIAGLSELGGEVIKVFIIPRLKFISERIEPHLLGTSISNTDKTAAGHIRAMLQKCCPPILRQMRSAPDTAEDYKNDFGFLGPSLCQAVVKVRNAPASSIVTLSSNTINTAPITSAAQTATTIGRVSMPTTQRQGSPGVSSLPQIRAIQANQPAQKFVIVTQNSPQQGQAKVVRRGSSPHSVVLSAASNAASASNSNSSSSGSLLAAAQRSSDNVCVIAGSEAPAVDGITVQSFRAS</sequence>
<organism>
    <name type="scientific">Drosophila melanogaster</name>
    <name type="common">Fruit fly</name>
    <dbReference type="NCBI Taxonomy" id="7227"/>
    <lineage>
        <taxon>Eukaryota</taxon>
        <taxon>Metazoa</taxon>
        <taxon>Ecdysozoa</taxon>
        <taxon>Arthropoda</taxon>
        <taxon>Hexapoda</taxon>
        <taxon>Insecta</taxon>
        <taxon>Pterygota</taxon>
        <taxon>Neoptera</taxon>
        <taxon>Endopterygota</taxon>
        <taxon>Diptera</taxon>
        <taxon>Brachycera</taxon>
        <taxon>Muscomorpha</taxon>
        <taxon>Ephydroidea</taxon>
        <taxon>Drosophilidae</taxon>
        <taxon>Drosophila</taxon>
        <taxon>Sophophora</taxon>
    </lineage>
</organism>
<feature type="chain" id="PRO_0000118877" description="Transcription initiation factor TFIID subunit 6">
    <location>
        <begin position="1"/>
        <end position="606"/>
    </location>
</feature>
<feature type="modified residue" description="Phosphoserine" evidence="1">
    <location>
        <position position="546"/>
    </location>
</feature>
<feature type="modified residue" description="Phosphoserine" evidence="1">
    <location>
        <position position="547"/>
    </location>
</feature>
<feature type="modified residue" description="Phosphoserine" evidence="1">
    <location>
        <position position="550"/>
    </location>
</feature>
<feature type="sequence conflict" description="In Ref. 4; AA sequence." evidence="4" ref="4">
    <original>G</original>
    <variation>K</variation>
    <location>
        <position position="3"/>
    </location>
</feature>
<feature type="sequence conflict" description="In Ref. 5; AAA16536." evidence="4" ref="5">
    <original>F</original>
    <variation>L</variation>
    <location>
        <position position="101"/>
    </location>
</feature>
<feature type="sequence conflict" description="In Ref. 4; AAC46480 and 5; AAA16536." evidence="4" ref="4 5">
    <original>D</original>
    <variation>E</variation>
    <location>
        <position position="582"/>
    </location>
</feature>
<feature type="helix" evidence="5">
    <location>
        <begin position="23"/>
        <end position="32"/>
    </location>
</feature>
<feature type="helix" evidence="5">
    <location>
        <begin position="40"/>
        <end position="67"/>
    </location>
</feature>
<feature type="strand" evidence="5">
    <location>
        <begin position="71"/>
        <end position="73"/>
    </location>
</feature>
<feature type="helix" evidence="5">
    <location>
        <begin position="75"/>
        <end position="82"/>
    </location>
</feature>
<protein>
    <recommendedName>
        <fullName>Transcription initiation factor TFIID subunit 6</fullName>
    </recommendedName>
    <alternativeName>
        <fullName>TAFII-60</fullName>
    </alternativeName>
    <alternativeName>
        <fullName>TAFII-62</fullName>
    </alternativeName>
    <alternativeName>
        <fullName>Transcription initiation factor TFIID 62 kDa subunit</fullName>
        <shortName>p62</shortName>
    </alternativeName>
</protein>
<name>TAF6_DROME</name>
<dbReference type="EMBL" id="AE014296">
    <property type="protein sequence ID" value="AAF49139.2"/>
    <property type="molecule type" value="Genomic_DNA"/>
</dbReference>
<dbReference type="EMBL" id="AY051702">
    <property type="protein sequence ID" value="AAK93126.1"/>
    <property type="molecule type" value="mRNA"/>
</dbReference>
<dbReference type="EMBL" id="U06459">
    <property type="protein sequence ID" value="AAC46480.1"/>
    <property type="status" value="ALT_INIT"/>
    <property type="molecule type" value="mRNA"/>
</dbReference>
<dbReference type="EMBL" id="L25443">
    <property type="protein sequence ID" value="AAA16536.1"/>
    <property type="status" value="ALT_INIT"/>
    <property type="molecule type" value="mRNA"/>
</dbReference>
<dbReference type="RefSeq" id="NP_524161.2">
    <property type="nucleotide sequence ID" value="NM_079437.4"/>
</dbReference>
<dbReference type="PDB" id="1TAF">
    <property type="method" value="X-ray"/>
    <property type="resolution" value="2.00 A"/>
    <property type="chains" value="B=15-84"/>
</dbReference>
<dbReference type="PDBsum" id="1TAF"/>
<dbReference type="SMR" id="P49847"/>
<dbReference type="BioGRID" id="65404">
    <property type="interactions" value="34"/>
</dbReference>
<dbReference type="DIP" id="DIP-778N"/>
<dbReference type="FunCoup" id="P49847">
    <property type="interactions" value="2147"/>
</dbReference>
<dbReference type="IntAct" id="P49847">
    <property type="interactions" value="7"/>
</dbReference>
<dbReference type="STRING" id="7227.FBpp0074709"/>
<dbReference type="GlyGen" id="P49847">
    <property type="glycosylation" value="1 site"/>
</dbReference>
<dbReference type="iPTMnet" id="P49847"/>
<dbReference type="PaxDb" id="7227-FBpp0074709"/>
<dbReference type="EnsemblMetazoa" id="FBtr0074941">
    <property type="protein sequence ID" value="FBpp0074709"/>
    <property type="gene ID" value="FBgn0010417"/>
</dbReference>
<dbReference type="GeneID" id="40134"/>
<dbReference type="KEGG" id="dme:Dmel_CG32211"/>
<dbReference type="AGR" id="FB:FBgn0010417"/>
<dbReference type="CTD" id="6878"/>
<dbReference type="FlyBase" id="FBgn0010417">
    <property type="gene designation" value="Taf6"/>
</dbReference>
<dbReference type="VEuPathDB" id="VectorBase:FBgn0010417"/>
<dbReference type="eggNOG" id="KOG2549">
    <property type="taxonomic scope" value="Eukaryota"/>
</dbReference>
<dbReference type="GeneTree" id="ENSGT00640000091486"/>
<dbReference type="InParanoid" id="P49847"/>
<dbReference type="OMA" id="MPEETCQ"/>
<dbReference type="OrthoDB" id="361039at2759"/>
<dbReference type="PhylomeDB" id="P49847"/>
<dbReference type="Reactome" id="R-DME-674695">
    <property type="pathway name" value="RNA Polymerase II Pre-transcription Events"/>
</dbReference>
<dbReference type="Reactome" id="R-DME-6804756">
    <property type="pathway name" value="Regulation of TP53 Activity through Phosphorylation"/>
</dbReference>
<dbReference type="Reactome" id="R-DME-6807505">
    <property type="pathway name" value="RNA polymerase II transcribes snRNA genes"/>
</dbReference>
<dbReference type="Reactome" id="R-DME-73776">
    <property type="pathway name" value="RNA Polymerase II Promoter Escape"/>
</dbReference>
<dbReference type="Reactome" id="R-DME-73779">
    <property type="pathway name" value="RNA Polymerase II Transcription Pre-Initiation And Promoter Opening"/>
</dbReference>
<dbReference type="Reactome" id="R-DME-75953">
    <property type="pathway name" value="RNA Polymerase II Transcription Initiation"/>
</dbReference>
<dbReference type="Reactome" id="R-DME-76042">
    <property type="pathway name" value="RNA Polymerase II Transcription Initiation And Promoter Clearance"/>
</dbReference>
<dbReference type="SignaLink" id="P49847"/>
<dbReference type="BioGRID-ORCS" id="40134">
    <property type="hits" value="1 hit in 1 CRISPR screen"/>
</dbReference>
<dbReference type="EvolutionaryTrace" id="P49847"/>
<dbReference type="GenomeRNAi" id="40134"/>
<dbReference type="PRO" id="PR:P49847"/>
<dbReference type="Proteomes" id="UP000000803">
    <property type="component" value="Chromosome 3L"/>
</dbReference>
<dbReference type="Bgee" id="FBgn0010417">
    <property type="expression patterns" value="Expressed in T neuron T4b (Drosophila) in embryonic/larval optic lobe (Drosophila) and 94 other cell types or tissues"/>
</dbReference>
<dbReference type="ExpressionAtlas" id="P49847">
    <property type="expression patterns" value="baseline and differential"/>
</dbReference>
<dbReference type="GO" id="GO:0005634">
    <property type="term" value="C:nucleus"/>
    <property type="evidence" value="ECO:0000314"/>
    <property type="project" value="FlyBase"/>
</dbReference>
<dbReference type="GO" id="GO:0000124">
    <property type="term" value="C:SAGA complex"/>
    <property type="evidence" value="ECO:0007669"/>
    <property type="project" value="InterPro"/>
</dbReference>
<dbReference type="GO" id="GO:0046695">
    <property type="term" value="C:SLIK (SAGA-like) complex"/>
    <property type="evidence" value="ECO:0007669"/>
    <property type="project" value="InterPro"/>
</dbReference>
<dbReference type="GO" id="GO:0005669">
    <property type="term" value="C:transcription factor TFIID complex"/>
    <property type="evidence" value="ECO:0000314"/>
    <property type="project" value="FlyBase"/>
</dbReference>
<dbReference type="GO" id="GO:0046982">
    <property type="term" value="F:protein heterodimerization activity"/>
    <property type="evidence" value="ECO:0007669"/>
    <property type="project" value="InterPro"/>
</dbReference>
<dbReference type="GO" id="GO:0016251">
    <property type="term" value="F:RNA polymerase II general transcription initiation factor activity"/>
    <property type="evidence" value="ECO:0007669"/>
    <property type="project" value="InterPro"/>
</dbReference>
<dbReference type="GO" id="GO:0003713">
    <property type="term" value="F:transcription coactivator activity"/>
    <property type="evidence" value="ECO:0000318"/>
    <property type="project" value="GO_Central"/>
</dbReference>
<dbReference type="GO" id="GO:0051123">
    <property type="term" value="P:RNA polymerase II preinitiation complex assembly"/>
    <property type="evidence" value="ECO:0000318"/>
    <property type="project" value="GO_Central"/>
</dbReference>
<dbReference type="GO" id="GO:0006366">
    <property type="term" value="P:transcription by RNA polymerase II"/>
    <property type="evidence" value="ECO:0000314"/>
    <property type="project" value="FlyBase"/>
</dbReference>
<dbReference type="GO" id="GO:0006367">
    <property type="term" value="P:transcription initiation at RNA polymerase II promoter"/>
    <property type="evidence" value="ECO:0000250"/>
    <property type="project" value="FlyBase"/>
</dbReference>
<dbReference type="CDD" id="cd22931">
    <property type="entry name" value="HFD_TAF6"/>
    <property type="match status" value="1"/>
</dbReference>
<dbReference type="CDD" id="cd08050">
    <property type="entry name" value="TAF6C"/>
    <property type="match status" value="1"/>
</dbReference>
<dbReference type="FunFam" id="1.10.20.10:FF:000030">
    <property type="entry name" value="Transcription initiation factor TFIID subunit 6"/>
    <property type="match status" value="1"/>
</dbReference>
<dbReference type="FunFam" id="1.25.40.770:FF:000001">
    <property type="entry name" value="Transcription initiation factor TFIID subunit 6"/>
    <property type="match status" value="1"/>
</dbReference>
<dbReference type="Gene3D" id="1.10.20.10">
    <property type="entry name" value="Histone, subunit A"/>
    <property type="match status" value="1"/>
</dbReference>
<dbReference type="Gene3D" id="1.25.40.770">
    <property type="entry name" value="TAF6, C-terminal HEAT repeat domain"/>
    <property type="match status" value="1"/>
</dbReference>
<dbReference type="InterPro" id="IPR016024">
    <property type="entry name" value="ARM-type_fold"/>
</dbReference>
<dbReference type="InterPro" id="IPR009072">
    <property type="entry name" value="Histone-fold"/>
</dbReference>
<dbReference type="InterPro" id="IPR037796">
    <property type="entry name" value="TAF6"/>
</dbReference>
<dbReference type="InterPro" id="IPR011442">
    <property type="entry name" value="TAF6_C"/>
</dbReference>
<dbReference type="InterPro" id="IPR046344">
    <property type="entry name" value="TAF6_C_sf"/>
</dbReference>
<dbReference type="InterPro" id="IPR004823">
    <property type="entry name" value="TAF_TATA-bd_Histone-like_dom"/>
</dbReference>
<dbReference type="PANTHER" id="PTHR10221">
    <property type="entry name" value="TRANSCRIPTION INITIATION FACTOR TFIID SUBUNIT 6"/>
    <property type="match status" value="1"/>
</dbReference>
<dbReference type="PANTHER" id="PTHR10221:SF9">
    <property type="entry name" value="TRANSCRIPTION INITIATION FACTOR TFIID SUBUNIT 6"/>
    <property type="match status" value="1"/>
</dbReference>
<dbReference type="Pfam" id="PF02969">
    <property type="entry name" value="TAF"/>
    <property type="match status" value="1"/>
</dbReference>
<dbReference type="Pfam" id="PF07571">
    <property type="entry name" value="TAF6_C"/>
    <property type="match status" value="1"/>
</dbReference>
<dbReference type="SMART" id="SM00803">
    <property type="entry name" value="TAF"/>
    <property type="match status" value="1"/>
</dbReference>
<dbReference type="SUPFAM" id="SSF48371">
    <property type="entry name" value="ARM repeat"/>
    <property type="match status" value="1"/>
</dbReference>
<dbReference type="SUPFAM" id="SSF47113">
    <property type="entry name" value="Histone-fold"/>
    <property type="match status" value="1"/>
</dbReference>
<comment type="function">
    <text evidence="2">TFIID is a multimeric protein complex that plays a central role in mediating promoter responses to various activators and repressors.</text>
</comment>
<comment type="subunit">
    <text evidence="2 3">Belongs to the TFIID complex which is composed of TATA binding protein (Tbp) and a number of TBP-associated factors (TAFs) (PubMed:8262073, PubMed:8598927). Taf9 and Taf6 exist as a heterotetramer (PubMed:8262073). Interacts with Taf1 (PubMed:8598927).</text>
</comment>
<comment type="interaction">
    <interactant intactId="EBI-136204">
        <id>P49847</id>
    </interactant>
    <interactant intactId="EBI-174260">
        <id>Q27272</id>
        <label>Taf9</label>
    </interactant>
    <organismsDiffer>false</organismsDiffer>
    <experiments>2</experiments>
</comment>
<comment type="subcellular location">
    <subcellularLocation>
        <location>Nucleus</location>
    </subcellularLocation>
</comment>
<comment type="similarity">
    <text evidence="4">Belongs to the TAF6 family.</text>
</comment>
<comment type="sequence caution" evidence="4">
    <conflict type="erroneous initiation">
        <sequence resource="EMBL-CDS" id="AAA16536"/>
    </conflict>
</comment>
<comment type="sequence caution" evidence="4">
    <conflict type="erroneous initiation">
        <sequence resource="EMBL-CDS" id="AAC46480"/>
    </conflict>
</comment>